<reference key="1">
    <citation type="journal article" date="1995" name="Science">
        <title>Whole-genome random sequencing and assembly of Haemophilus influenzae Rd.</title>
        <authorList>
            <person name="Fleischmann R.D."/>
            <person name="Adams M.D."/>
            <person name="White O."/>
            <person name="Clayton R.A."/>
            <person name="Kirkness E.F."/>
            <person name="Kerlavage A.R."/>
            <person name="Bult C.J."/>
            <person name="Tomb J.-F."/>
            <person name="Dougherty B.A."/>
            <person name="Merrick J.M."/>
            <person name="McKenney K."/>
            <person name="Sutton G.G."/>
            <person name="FitzHugh W."/>
            <person name="Fields C.A."/>
            <person name="Gocayne J.D."/>
            <person name="Scott J.D."/>
            <person name="Shirley R."/>
            <person name="Liu L.-I."/>
            <person name="Glodek A."/>
            <person name="Kelley J.M."/>
            <person name="Weidman J.F."/>
            <person name="Phillips C.A."/>
            <person name="Spriggs T."/>
            <person name="Hedblom E."/>
            <person name="Cotton M.D."/>
            <person name="Utterback T.R."/>
            <person name="Hanna M.C."/>
            <person name="Nguyen D.T."/>
            <person name="Saudek D.M."/>
            <person name="Brandon R.C."/>
            <person name="Fine L.D."/>
            <person name="Fritchman J.L."/>
            <person name="Fuhrmann J.L."/>
            <person name="Geoghagen N.S.M."/>
            <person name="Gnehm C.L."/>
            <person name="McDonald L.A."/>
            <person name="Small K.V."/>
            <person name="Fraser C.M."/>
            <person name="Smith H.O."/>
            <person name="Venter J.C."/>
        </authorList>
    </citation>
    <scope>NUCLEOTIDE SEQUENCE [LARGE SCALE GENOMIC DNA]</scope>
    <source>
        <strain>ATCC 51907 / DSM 11121 / KW20 / Rd</strain>
    </source>
</reference>
<proteinExistence type="inferred from homology"/>
<comment type="function">
    <text evidence="1">Involved in transcription antitermination. Required for transcription of ribosomal RNA (rRNA) genes. Binds specifically to the boxA antiterminator sequence of the ribosomal RNA (rrn) operons.</text>
</comment>
<comment type="similarity">
    <text evidence="1 2">Belongs to the NusB family.</text>
</comment>
<keyword id="KW-1185">Reference proteome</keyword>
<keyword id="KW-0694">RNA-binding</keyword>
<keyword id="KW-0804">Transcription</keyword>
<keyword id="KW-0889">Transcription antitermination</keyword>
<keyword id="KW-0805">Transcription regulation</keyword>
<accession>P45150</accession>
<protein>
    <recommendedName>
        <fullName evidence="1">Transcription antitermination protein NusB</fullName>
    </recommendedName>
    <alternativeName>
        <fullName evidence="1">Antitermination factor NusB</fullName>
    </alternativeName>
</protein>
<gene>
    <name evidence="1" type="primary">nusB</name>
    <name type="ordered locus">HI_1304</name>
</gene>
<name>NUSB_HAEIN</name>
<organism>
    <name type="scientific">Haemophilus influenzae (strain ATCC 51907 / DSM 11121 / KW20 / Rd)</name>
    <dbReference type="NCBI Taxonomy" id="71421"/>
    <lineage>
        <taxon>Bacteria</taxon>
        <taxon>Pseudomonadati</taxon>
        <taxon>Pseudomonadota</taxon>
        <taxon>Gammaproteobacteria</taxon>
        <taxon>Pasteurellales</taxon>
        <taxon>Pasteurellaceae</taxon>
        <taxon>Haemophilus</taxon>
    </lineage>
</organism>
<sequence>MTEQKQVKKPSARRRARECTVQALYSWAVSGNTAEQVELAFVLDQDMDGVDKPYFRKLFRQTIENIETVDFSISPYIDRAFDELDPIETAILRLAVYELRFELDVPYKVVINEAIEVAKVFGADESHKYINGVLDKIAPALGRK</sequence>
<dbReference type="EMBL" id="L42023">
    <property type="protein sequence ID" value="AAC22951.1"/>
    <property type="molecule type" value="Genomic_DNA"/>
</dbReference>
<dbReference type="PIR" id="D64115">
    <property type="entry name" value="D64115"/>
</dbReference>
<dbReference type="RefSeq" id="NP_439455.1">
    <property type="nucleotide sequence ID" value="NC_000907.1"/>
</dbReference>
<dbReference type="SMR" id="P45150"/>
<dbReference type="STRING" id="71421.HI_1304"/>
<dbReference type="EnsemblBacteria" id="AAC22951">
    <property type="protein sequence ID" value="AAC22951"/>
    <property type="gene ID" value="HI_1304"/>
</dbReference>
<dbReference type="KEGG" id="hin:HI_1304"/>
<dbReference type="PATRIC" id="fig|71421.8.peg.1356"/>
<dbReference type="eggNOG" id="COG0781">
    <property type="taxonomic scope" value="Bacteria"/>
</dbReference>
<dbReference type="HOGENOM" id="CLU_087843_4_1_6"/>
<dbReference type="OrthoDB" id="9789556at2"/>
<dbReference type="PhylomeDB" id="P45150"/>
<dbReference type="BioCyc" id="HINF71421:G1GJ1-1329-MONOMER"/>
<dbReference type="Proteomes" id="UP000000579">
    <property type="component" value="Chromosome"/>
</dbReference>
<dbReference type="GO" id="GO:0005829">
    <property type="term" value="C:cytosol"/>
    <property type="evidence" value="ECO:0000318"/>
    <property type="project" value="GO_Central"/>
</dbReference>
<dbReference type="GO" id="GO:0003723">
    <property type="term" value="F:RNA binding"/>
    <property type="evidence" value="ECO:0007669"/>
    <property type="project" value="UniProtKB-UniRule"/>
</dbReference>
<dbReference type="GO" id="GO:0006353">
    <property type="term" value="P:DNA-templated transcription termination"/>
    <property type="evidence" value="ECO:0007669"/>
    <property type="project" value="UniProtKB-UniRule"/>
</dbReference>
<dbReference type="GO" id="GO:0031564">
    <property type="term" value="P:transcription antitermination"/>
    <property type="evidence" value="ECO:0007669"/>
    <property type="project" value="UniProtKB-KW"/>
</dbReference>
<dbReference type="CDD" id="cd00619">
    <property type="entry name" value="Terminator_NusB"/>
    <property type="match status" value="1"/>
</dbReference>
<dbReference type="FunFam" id="1.10.940.10:FF:000001">
    <property type="entry name" value="Transcription antitermination factor NusB"/>
    <property type="match status" value="1"/>
</dbReference>
<dbReference type="Gene3D" id="1.10.940.10">
    <property type="entry name" value="NusB-like"/>
    <property type="match status" value="1"/>
</dbReference>
<dbReference type="HAMAP" id="MF_00073">
    <property type="entry name" value="NusB"/>
    <property type="match status" value="1"/>
</dbReference>
<dbReference type="InterPro" id="IPR035926">
    <property type="entry name" value="NusB-like_sf"/>
</dbReference>
<dbReference type="InterPro" id="IPR011605">
    <property type="entry name" value="NusB_fam"/>
</dbReference>
<dbReference type="InterPro" id="IPR006027">
    <property type="entry name" value="NusB_RsmB_TIM44"/>
</dbReference>
<dbReference type="NCBIfam" id="TIGR01951">
    <property type="entry name" value="nusB"/>
    <property type="match status" value="1"/>
</dbReference>
<dbReference type="PANTHER" id="PTHR11078:SF3">
    <property type="entry name" value="ANTITERMINATION NUSB DOMAIN-CONTAINING PROTEIN"/>
    <property type="match status" value="1"/>
</dbReference>
<dbReference type="PANTHER" id="PTHR11078">
    <property type="entry name" value="N UTILIZATION SUBSTANCE PROTEIN B-RELATED"/>
    <property type="match status" value="1"/>
</dbReference>
<dbReference type="Pfam" id="PF01029">
    <property type="entry name" value="NusB"/>
    <property type="match status" value="1"/>
</dbReference>
<dbReference type="SUPFAM" id="SSF48013">
    <property type="entry name" value="NusB-like"/>
    <property type="match status" value="1"/>
</dbReference>
<evidence type="ECO:0000255" key="1">
    <source>
        <dbReference type="HAMAP-Rule" id="MF_00073"/>
    </source>
</evidence>
<evidence type="ECO:0000305" key="2"/>
<feature type="chain" id="PRO_0000176543" description="Transcription antitermination protein NusB">
    <location>
        <begin position="1"/>
        <end position="144"/>
    </location>
</feature>